<proteinExistence type="inferred from homology"/>
<evidence type="ECO:0000255" key="1">
    <source>
        <dbReference type="HAMAP-Rule" id="MF_01363"/>
    </source>
</evidence>
<evidence type="ECO:0000256" key="2">
    <source>
        <dbReference type="SAM" id="MobiDB-lite"/>
    </source>
</evidence>
<evidence type="ECO:0000305" key="3"/>
<reference key="1">
    <citation type="journal article" date="2004" name="Science">
        <title>A predator unmasked: life cycle of Bdellovibrio bacteriovorus from a genomic perspective.</title>
        <authorList>
            <person name="Rendulic S."/>
            <person name="Jagtap P."/>
            <person name="Rosinus A."/>
            <person name="Eppinger M."/>
            <person name="Baar C."/>
            <person name="Lanz C."/>
            <person name="Keller H."/>
            <person name="Lambert C."/>
            <person name="Evans K.J."/>
            <person name="Goesmann A."/>
            <person name="Meyer F."/>
            <person name="Sockett R.E."/>
            <person name="Schuster S.C."/>
        </authorList>
    </citation>
    <scope>NUCLEOTIDE SEQUENCE [LARGE SCALE GENOMIC DNA]</scope>
    <source>
        <strain>ATCC 15356 / DSM 50701 / NCIMB 9529 / HD100</strain>
    </source>
</reference>
<dbReference type="EMBL" id="BX842656">
    <property type="protein sequence ID" value="CAE81206.1"/>
    <property type="status" value="ALT_INIT"/>
    <property type="molecule type" value="Genomic_DNA"/>
</dbReference>
<dbReference type="RefSeq" id="WP_038450368.1">
    <property type="nucleotide sequence ID" value="NC_005363.1"/>
</dbReference>
<dbReference type="SMR" id="Q6MGS3"/>
<dbReference type="STRING" id="264462.Bd3849"/>
<dbReference type="GeneID" id="93014618"/>
<dbReference type="KEGG" id="bba:Bd3849"/>
<dbReference type="eggNOG" id="COG0261">
    <property type="taxonomic scope" value="Bacteria"/>
</dbReference>
<dbReference type="HOGENOM" id="CLU_061463_1_1_7"/>
<dbReference type="Proteomes" id="UP000008080">
    <property type="component" value="Chromosome"/>
</dbReference>
<dbReference type="GO" id="GO:0005737">
    <property type="term" value="C:cytoplasm"/>
    <property type="evidence" value="ECO:0007669"/>
    <property type="project" value="UniProtKB-ARBA"/>
</dbReference>
<dbReference type="GO" id="GO:1990904">
    <property type="term" value="C:ribonucleoprotein complex"/>
    <property type="evidence" value="ECO:0007669"/>
    <property type="project" value="UniProtKB-KW"/>
</dbReference>
<dbReference type="GO" id="GO:0005840">
    <property type="term" value="C:ribosome"/>
    <property type="evidence" value="ECO:0007669"/>
    <property type="project" value="UniProtKB-KW"/>
</dbReference>
<dbReference type="GO" id="GO:0019843">
    <property type="term" value="F:rRNA binding"/>
    <property type="evidence" value="ECO:0007669"/>
    <property type="project" value="UniProtKB-UniRule"/>
</dbReference>
<dbReference type="GO" id="GO:0003735">
    <property type="term" value="F:structural constituent of ribosome"/>
    <property type="evidence" value="ECO:0007669"/>
    <property type="project" value="InterPro"/>
</dbReference>
<dbReference type="GO" id="GO:0006412">
    <property type="term" value="P:translation"/>
    <property type="evidence" value="ECO:0007669"/>
    <property type="project" value="UniProtKB-UniRule"/>
</dbReference>
<dbReference type="HAMAP" id="MF_01363">
    <property type="entry name" value="Ribosomal_bL21"/>
    <property type="match status" value="1"/>
</dbReference>
<dbReference type="InterPro" id="IPR028909">
    <property type="entry name" value="bL21-like"/>
</dbReference>
<dbReference type="InterPro" id="IPR036164">
    <property type="entry name" value="bL21-like_sf"/>
</dbReference>
<dbReference type="InterPro" id="IPR001787">
    <property type="entry name" value="Ribosomal_bL21"/>
</dbReference>
<dbReference type="NCBIfam" id="TIGR00061">
    <property type="entry name" value="L21"/>
    <property type="match status" value="1"/>
</dbReference>
<dbReference type="PANTHER" id="PTHR21349">
    <property type="entry name" value="50S RIBOSOMAL PROTEIN L21"/>
    <property type="match status" value="1"/>
</dbReference>
<dbReference type="PANTHER" id="PTHR21349:SF0">
    <property type="entry name" value="LARGE RIBOSOMAL SUBUNIT PROTEIN BL21M"/>
    <property type="match status" value="1"/>
</dbReference>
<dbReference type="Pfam" id="PF00829">
    <property type="entry name" value="Ribosomal_L21p"/>
    <property type="match status" value="1"/>
</dbReference>
<dbReference type="SUPFAM" id="SSF141091">
    <property type="entry name" value="L21p-like"/>
    <property type="match status" value="1"/>
</dbReference>
<protein>
    <recommendedName>
        <fullName evidence="1">Large ribosomal subunit protein bL21</fullName>
    </recommendedName>
    <alternativeName>
        <fullName evidence="3">50S ribosomal protein L21</fullName>
    </alternativeName>
</protein>
<name>RL21_BDEBA</name>
<feature type="chain" id="PRO_0000270639" description="Large ribosomal subunit protein bL21">
    <location>
        <begin position="1"/>
        <end position="187"/>
    </location>
</feature>
<feature type="region of interest" description="Disordered" evidence="2">
    <location>
        <begin position="157"/>
        <end position="187"/>
    </location>
</feature>
<sequence>MYAIIRTGGKQYKVQAGDVVQVDKLEQALGAEFEINEVLMVGGESTAVGQPLVKGAKVTVVVTKQAKTRKEIVFKKKRRQGYRKFATHKQEFTELFVKAISFDGKTAKSDEAATVVDVKAVRAEKAQARVAARKERAANKGPAEVVKKAAKKVAKKKVAKKAVKKTVKKATKTGAKKKAAKKTSKKA</sequence>
<gene>
    <name evidence="1" type="primary">rplU</name>
    <name type="ordered locus">Bd3849</name>
</gene>
<keyword id="KW-1185">Reference proteome</keyword>
<keyword id="KW-0687">Ribonucleoprotein</keyword>
<keyword id="KW-0689">Ribosomal protein</keyword>
<keyword id="KW-0694">RNA-binding</keyword>
<keyword id="KW-0699">rRNA-binding</keyword>
<comment type="function">
    <text evidence="1">This protein binds to 23S rRNA in the presence of protein L20.</text>
</comment>
<comment type="subunit">
    <text evidence="1">Part of the 50S ribosomal subunit. Contacts protein L20.</text>
</comment>
<comment type="similarity">
    <text evidence="1">Belongs to the bacterial ribosomal protein bL21 family.</text>
</comment>
<comment type="sequence caution" evidence="3">
    <conflict type="erroneous initiation">
        <sequence resource="EMBL-CDS" id="CAE81206"/>
    </conflict>
</comment>
<accession>Q6MGS3</accession>
<organism>
    <name type="scientific">Bdellovibrio bacteriovorus (strain ATCC 15356 / DSM 50701 / NCIMB 9529 / HD100)</name>
    <dbReference type="NCBI Taxonomy" id="264462"/>
    <lineage>
        <taxon>Bacteria</taxon>
        <taxon>Pseudomonadati</taxon>
        <taxon>Bdellovibrionota</taxon>
        <taxon>Bdellovibrionia</taxon>
        <taxon>Bdellovibrionales</taxon>
        <taxon>Pseudobdellovibrionaceae</taxon>
        <taxon>Bdellovibrio</taxon>
    </lineage>
</organism>